<dbReference type="EMBL" id="M33696">
    <property type="protein sequence ID" value="AAA49445.1"/>
    <property type="molecule type" value="mRNA"/>
</dbReference>
<dbReference type="EMBL" id="M33695">
    <property type="protein sequence ID" value="AAA49444.1"/>
    <property type="molecule type" value="mRNA"/>
</dbReference>
<dbReference type="PIR" id="A35793">
    <property type="entry name" value="A35793"/>
</dbReference>
<dbReference type="RefSeq" id="XP_019950511.1">
    <property type="nucleotide sequence ID" value="XM_020094952.2"/>
</dbReference>
<dbReference type="SMR" id="P20362"/>
<dbReference type="GeneID" id="109634465"/>
<dbReference type="KEGG" id="pov:109634465"/>
<dbReference type="CTD" id="572522"/>
<dbReference type="OrthoDB" id="9945472at2759"/>
<dbReference type="GO" id="GO:0005615">
    <property type="term" value="C:extracellular space"/>
    <property type="evidence" value="ECO:0007669"/>
    <property type="project" value="TreeGrafter"/>
</dbReference>
<dbReference type="GO" id="GO:0070186">
    <property type="term" value="F:growth hormone activity"/>
    <property type="evidence" value="ECO:0007669"/>
    <property type="project" value="TreeGrafter"/>
</dbReference>
<dbReference type="GO" id="GO:0005131">
    <property type="term" value="F:growth hormone receptor binding"/>
    <property type="evidence" value="ECO:0007669"/>
    <property type="project" value="TreeGrafter"/>
</dbReference>
<dbReference type="GO" id="GO:0048513">
    <property type="term" value="P:animal organ development"/>
    <property type="evidence" value="ECO:0007669"/>
    <property type="project" value="TreeGrafter"/>
</dbReference>
<dbReference type="GO" id="GO:0060396">
    <property type="term" value="P:growth hormone receptor signaling pathway"/>
    <property type="evidence" value="ECO:0007669"/>
    <property type="project" value="TreeGrafter"/>
</dbReference>
<dbReference type="GO" id="GO:0045927">
    <property type="term" value="P:positive regulation of growth"/>
    <property type="evidence" value="ECO:0007669"/>
    <property type="project" value="TreeGrafter"/>
</dbReference>
<dbReference type="GO" id="GO:0046427">
    <property type="term" value="P:positive regulation of receptor signaling pathway via JAK-STAT"/>
    <property type="evidence" value="ECO:0007669"/>
    <property type="project" value="TreeGrafter"/>
</dbReference>
<dbReference type="GO" id="GO:0031667">
    <property type="term" value="P:response to nutrient levels"/>
    <property type="evidence" value="ECO:0007669"/>
    <property type="project" value="TreeGrafter"/>
</dbReference>
<dbReference type="FunFam" id="1.20.1250.10:FF:000042">
    <property type="entry name" value="Somatolactin alpha"/>
    <property type="match status" value="1"/>
</dbReference>
<dbReference type="Gene3D" id="1.20.1250.10">
    <property type="match status" value="1"/>
</dbReference>
<dbReference type="InterPro" id="IPR009079">
    <property type="entry name" value="4_helix_cytokine-like_core"/>
</dbReference>
<dbReference type="InterPro" id="IPR001400">
    <property type="entry name" value="Somatotropin/Prolactin"/>
</dbReference>
<dbReference type="InterPro" id="IPR018116">
    <property type="entry name" value="Somatotropin_CS"/>
</dbReference>
<dbReference type="PANTHER" id="PTHR11417:SF3">
    <property type="entry name" value="SOMATOLACTIN ALPHA ISOFORM X1-RELATED"/>
    <property type="match status" value="1"/>
</dbReference>
<dbReference type="PANTHER" id="PTHR11417">
    <property type="entry name" value="SOMATOTROPIN,PROLACTIN"/>
    <property type="match status" value="1"/>
</dbReference>
<dbReference type="Pfam" id="PF00103">
    <property type="entry name" value="Hormone_1"/>
    <property type="match status" value="1"/>
</dbReference>
<dbReference type="PRINTS" id="PR00836">
    <property type="entry name" value="SOMATOTROPIN"/>
</dbReference>
<dbReference type="SUPFAM" id="SSF47266">
    <property type="entry name" value="4-helical cytokines"/>
    <property type="match status" value="1"/>
</dbReference>
<dbReference type="PROSITE" id="PS00266">
    <property type="entry name" value="SOMATOTROPIN_1"/>
    <property type="match status" value="1"/>
</dbReference>
<dbReference type="PROSITE" id="PS00338">
    <property type="entry name" value="SOMATOTROPIN_2"/>
    <property type="match status" value="1"/>
</dbReference>
<keyword id="KW-0903">Direct protein sequencing</keyword>
<keyword id="KW-1015">Disulfide bond</keyword>
<keyword id="KW-0325">Glycoprotein</keyword>
<keyword id="KW-0372">Hormone</keyword>
<keyword id="KW-0964">Secreted</keyword>
<keyword id="KW-0732">Signal</keyword>
<protein>
    <recommendedName>
        <fullName>Somatolactin</fullName>
        <shortName>SL</shortName>
    </recommendedName>
</protein>
<proteinExistence type="evidence at protein level"/>
<comment type="subcellular location">
    <subcellularLocation>
        <location>Secreted</location>
    </subcellularLocation>
</comment>
<comment type="tissue specificity">
    <text>Pituitary gland.</text>
</comment>
<comment type="similarity">
    <text evidence="4">Belongs to the somatotropin/prolactin family.</text>
</comment>
<name>SOML_PAROL</name>
<organism>
    <name type="scientific">Paralichthys olivaceus</name>
    <name type="common">Bastard halibut</name>
    <name type="synonym">Hippoglossus olivaceus</name>
    <dbReference type="NCBI Taxonomy" id="8255"/>
    <lineage>
        <taxon>Eukaryota</taxon>
        <taxon>Metazoa</taxon>
        <taxon>Chordata</taxon>
        <taxon>Craniata</taxon>
        <taxon>Vertebrata</taxon>
        <taxon>Euteleostomi</taxon>
        <taxon>Actinopterygii</taxon>
        <taxon>Neopterygii</taxon>
        <taxon>Teleostei</taxon>
        <taxon>Neoteleostei</taxon>
        <taxon>Acanthomorphata</taxon>
        <taxon>Carangaria</taxon>
        <taxon>Pleuronectiformes</taxon>
        <taxon>Pleuronectoidei</taxon>
        <taxon>Paralichthyidae</taxon>
        <taxon>Paralichthys</taxon>
    </lineage>
</organism>
<reference key="1">
    <citation type="journal article" date="1990" name="Proc. Natl. Acad. Sci. U.S.A.">
        <title>cDNA cloning of somatolactin, a pituitary protein related to growth hormone and prolactin.</title>
        <authorList>
            <person name="Ono M."/>
            <person name="Takayama Y."/>
            <person name="Rand-Weaver M."/>
            <person name="Sakata S."/>
            <person name="Yasunaga T."/>
            <person name="Noso T."/>
            <person name="Kawauchi H."/>
        </authorList>
    </citation>
    <scope>NUCLEOTIDE SEQUENCE [MRNA]</scope>
    <scope>PROTEIN SEQUENCE OF 25-47</scope>
    <source>
        <tissue>Pituitary</tissue>
    </source>
</reference>
<sequence>MNMMTVKQQGVWAALLWPYLLTASIPLDCKEEQGSLSRCPSISQEKLLDRVIQHAELIYRVSEESCSMFEEMFVPFPLRLQRNQAGYACITKALPIPSSKSEIQQISDTWLLHSVLMLVQSWIEPLVYLQTTLDRYDNAPDMLLNKTKWVSDKLISLEQGVVVLIRKMLDEGMLTATYNEQGLFQYDAQPDMLESVMRDYTLLSCFKKDAHKMEIFLKLLKCRQTDKYNCA</sequence>
<accession>P20362</accession>
<evidence type="ECO:0000250" key="1"/>
<evidence type="ECO:0000255" key="2"/>
<evidence type="ECO:0000269" key="3">
    <source>
    </source>
</evidence>
<evidence type="ECO:0000305" key="4"/>
<feature type="signal peptide" evidence="3">
    <location>
        <begin position="1"/>
        <end position="24"/>
    </location>
</feature>
<feature type="chain" id="PRO_0000033072" description="Somatolactin">
    <location>
        <begin position="25"/>
        <end position="231"/>
    </location>
</feature>
<feature type="glycosylation site" description="N-linked (GlcNAc...) asparagine" evidence="2">
    <location>
        <position position="145"/>
    </location>
</feature>
<feature type="disulfide bond" evidence="1">
    <location>
        <begin position="29"/>
        <end position="39"/>
    </location>
</feature>
<feature type="disulfide bond" evidence="1">
    <location>
        <begin position="89"/>
        <end position="205"/>
    </location>
</feature>
<feature type="disulfide bond" evidence="1">
    <location>
        <begin position="222"/>
        <end position="230"/>
    </location>
</feature>